<protein>
    <recommendedName>
        <fullName evidence="1">UDP-N-acetylmuramoylalanine--D-glutamate ligase</fullName>
        <ecNumber evidence="1">6.3.2.9</ecNumber>
    </recommendedName>
    <alternativeName>
        <fullName evidence="1">D-glutamic acid-adding enzyme</fullName>
    </alternativeName>
    <alternativeName>
        <fullName evidence="1">UDP-N-acetylmuramoyl-L-alanyl-D-glutamate synthetase</fullName>
    </alternativeName>
</protein>
<gene>
    <name evidence="1" type="primary">murD</name>
    <name type="ordered locus">LI1102</name>
</gene>
<feature type="chain" id="PRO_0000257200" description="UDP-N-acetylmuramoylalanine--D-glutamate ligase">
    <location>
        <begin position="1"/>
        <end position="440"/>
    </location>
</feature>
<feature type="binding site" evidence="1">
    <location>
        <begin position="128"/>
        <end position="134"/>
    </location>
    <ligand>
        <name>ATP</name>
        <dbReference type="ChEBI" id="CHEBI:30616"/>
    </ligand>
</feature>
<proteinExistence type="inferred from homology"/>
<name>MURD_LAWIP</name>
<sequence length="440" mass="48979">MLSIANNCCISLAQNEWPLYKVAVVGTGRSGMAAARLLHSLGASIRIVDKTRENVSKTFMDWIKQTNCEVMFGEHCPKQFEDIDIVIPSPGVPLNLLKPHFLNTIQVLSETELAWYQLSNEKVIAITGTNGKTTIASLCAAMLVEQGISVFVGGNIGTPLSEYVLCKKKVSVVVLELSSFQLQTCSLFRPDIAICSNISINHLDYHRNMDEYISAKLNICKNQCESDLAILKPGMEALVDSYNLKARVVFYRDLGNFSTSRLLGVHNLENAEAAWLACKELGVTEEIAKKVVTTFEPLEHRLEQVRLLNGVLYVNDSKGTTVEALRAALESFKQPILLLAGGRFKGGDLTSLRPIIKKQVRIVGLFGNSREYFEDAWGDIIPITWDNTLEQAVKRLSNLAHNGEVILLAPATSSFDQYMNYIERGNDFKRIVHEVLNEHC</sequence>
<dbReference type="EC" id="6.3.2.9" evidence="1"/>
<dbReference type="EMBL" id="AM180252">
    <property type="protein sequence ID" value="CAJ55156.1"/>
    <property type="molecule type" value="Genomic_DNA"/>
</dbReference>
<dbReference type="RefSeq" id="WP_011527185.1">
    <property type="nucleotide sequence ID" value="NC_008011.1"/>
</dbReference>
<dbReference type="SMR" id="Q1MPC1"/>
<dbReference type="STRING" id="363253.LI1102"/>
<dbReference type="KEGG" id="lip:LI1102"/>
<dbReference type="eggNOG" id="COG0771">
    <property type="taxonomic scope" value="Bacteria"/>
</dbReference>
<dbReference type="HOGENOM" id="CLU_032540_0_0_7"/>
<dbReference type="OrthoDB" id="9809796at2"/>
<dbReference type="UniPathway" id="UPA00219"/>
<dbReference type="Proteomes" id="UP000002430">
    <property type="component" value="Chromosome"/>
</dbReference>
<dbReference type="GO" id="GO:0005737">
    <property type="term" value="C:cytoplasm"/>
    <property type="evidence" value="ECO:0007669"/>
    <property type="project" value="UniProtKB-SubCell"/>
</dbReference>
<dbReference type="GO" id="GO:0005524">
    <property type="term" value="F:ATP binding"/>
    <property type="evidence" value="ECO:0007669"/>
    <property type="project" value="UniProtKB-UniRule"/>
</dbReference>
<dbReference type="GO" id="GO:0071949">
    <property type="term" value="F:FAD binding"/>
    <property type="evidence" value="ECO:0007669"/>
    <property type="project" value="InterPro"/>
</dbReference>
<dbReference type="GO" id="GO:0008764">
    <property type="term" value="F:UDP-N-acetylmuramoylalanine-D-glutamate ligase activity"/>
    <property type="evidence" value="ECO:0007669"/>
    <property type="project" value="UniProtKB-UniRule"/>
</dbReference>
<dbReference type="GO" id="GO:0051301">
    <property type="term" value="P:cell division"/>
    <property type="evidence" value="ECO:0007669"/>
    <property type="project" value="UniProtKB-KW"/>
</dbReference>
<dbReference type="GO" id="GO:0071555">
    <property type="term" value="P:cell wall organization"/>
    <property type="evidence" value="ECO:0007669"/>
    <property type="project" value="UniProtKB-KW"/>
</dbReference>
<dbReference type="GO" id="GO:0009252">
    <property type="term" value="P:peptidoglycan biosynthetic process"/>
    <property type="evidence" value="ECO:0007669"/>
    <property type="project" value="UniProtKB-UniRule"/>
</dbReference>
<dbReference type="GO" id="GO:0008360">
    <property type="term" value="P:regulation of cell shape"/>
    <property type="evidence" value="ECO:0007669"/>
    <property type="project" value="UniProtKB-KW"/>
</dbReference>
<dbReference type="Gene3D" id="3.90.190.20">
    <property type="entry name" value="Mur ligase, C-terminal domain"/>
    <property type="match status" value="1"/>
</dbReference>
<dbReference type="Gene3D" id="3.40.1190.10">
    <property type="entry name" value="Mur-like, catalytic domain"/>
    <property type="match status" value="1"/>
</dbReference>
<dbReference type="Gene3D" id="3.40.50.720">
    <property type="entry name" value="NAD(P)-binding Rossmann-like Domain"/>
    <property type="match status" value="1"/>
</dbReference>
<dbReference type="HAMAP" id="MF_00639">
    <property type="entry name" value="MurD"/>
    <property type="match status" value="1"/>
</dbReference>
<dbReference type="InterPro" id="IPR002938">
    <property type="entry name" value="FAD-bd"/>
</dbReference>
<dbReference type="InterPro" id="IPR036565">
    <property type="entry name" value="Mur-like_cat_sf"/>
</dbReference>
<dbReference type="InterPro" id="IPR004101">
    <property type="entry name" value="Mur_ligase_C"/>
</dbReference>
<dbReference type="InterPro" id="IPR036615">
    <property type="entry name" value="Mur_ligase_C_dom_sf"/>
</dbReference>
<dbReference type="InterPro" id="IPR013221">
    <property type="entry name" value="Mur_ligase_cen"/>
</dbReference>
<dbReference type="InterPro" id="IPR005762">
    <property type="entry name" value="MurD"/>
</dbReference>
<dbReference type="NCBIfam" id="TIGR01087">
    <property type="entry name" value="murD"/>
    <property type="match status" value="1"/>
</dbReference>
<dbReference type="PANTHER" id="PTHR43692">
    <property type="entry name" value="UDP-N-ACETYLMURAMOYLALANINE--D-GLUTAMATE LIGASE"/>
    <property type="match status" value="1"/>
</dbReference>
<dbReference type="PANTHER" id="PTHR43692:SF1">
    <property type="entry name" value="UDP-N-ACETYLMURAMOYLALANINE--D-GLUTAMATE LIGASE"/>
    <property type="match status" value="1"/>
</dbReference>
<dbReference type="Pfam" id="PF01494">
    <property type="entry name" value="FAD_binding_3"/>
    <property type="match status" value="1"/>
</dbReference>
<dbReference type="Pfam" id="PF02875">
    <property type="entry name" value="Mur_ligase_C"/>
    <property type="match status" value="1"/>
</dbReference>
<dbReference type="Pfam" id="PF08245">
    <property type="entry name" value="Mur_ligase_M"/>
    <property type="match status" value="1"/>
</dbReference>
<dbReference type="Pfam" id="PF21799">
    <property type="entry name" value="MurD-like_N"/>
    <property type="match status" value="1"/>
</dbReference>
<dbReference type="SUPFAM" id="SSF51984">
    <property type="entry name" value="MurCD N-terminal domain"/>
    <property type="match status" value="1"/>
</dbReference>
<dbReference type="SUPFAM" id="SSF53623">
    <property type="entry name" value="MurD-like peptide ligases, catalytic domain"/>
    <property type="match status" value="1"/>
</dbReference>
<dbReference type="SUPFAM" id="SSF53244">
    <property type="entry name" value="MurD-like peptide ligases, peptide-binding domain"/>
    <property type="match status" value="1"/>
</dbReference>
<reference key="1">
    <citation type="submission" date="2005-11" db="EMBL/GenBank/DDBJ databases">
        <title>The complete genome sequence of Lawsonia intracellularis: the causative agent of proliferative enteropathy.</title>
        <authorList>
            <person name="Kaur K."/>
            <person name="Zhang Q."/>
            <person name="Beckler D."/>
            <person name="Munir S."/>
            <person name="Li L."/>
            <person name="Kinsley K."/>
            <person name="Herron L."/>
            <person name="Peterson A."/>
            <person name="May B."/>
            <person name="Singh S."/>
            <person name="Gebhart C."/>
            <person name="Kapur V."/>
        </authorList>
    </citation>
    <scope>NUCLEOTIDE SEQUENCE [LARGE SCALE GENOMIC DNA]</scope>
    <source>
        <strain>PHE/MN1-00</strain>
    </source>
</reference>
<evidence type="ECO:0000255" key="1">
    <source>
        <dbReference type="HAMAP-Rule" id="MF_00639"/>
    </source>
</evidence>
<organism>
    <name type="scientific">Lawsonia intracellularis (strain PHE/MN1-00)</name>
    <dbReference type="NCBI Taxonomy" id="363253"/>
    <lineage>
        <taxon>Bacteria</taxon>
        <taxon>Pseudomonadati</taxon>
        <taxon>Thermodesulfobacteriota</taxon>
        <taxon>Desulfovibrionia</taxon>
        <taxon>Desulfovibrionales</taxon>
        <taxon>Desulfovibrionaceae</taxon>
        <taxon>Lawsonia</taxon>
    </lineage>
</organism>
<accession>Q1MPC1</accession>
<comment type="function">
    <text evidence="1">Cell wall formation. Catalyzes the addition of glutamate to the nucleotide precursor UDP-N-acetylmuramoyl-L-alanine (UMA).</text>
</comment>
<comment type="catalytic activity">
    <reaction evidence="1">
        <text>UDP-N-acetyl-alpha-D-muramoyl-L-alanine + D-glutamate + ATP = UDP-N-acetyl-alpha-D-muramoyl-L-alanyl-D-glutamate + ADP + phosphate + H(+)</text>
        <dbReference type="Rhea" id="RHEA:16429"/>
        <dbReference type="ChEBI" id="CHEBI:15378"/>
        <dbReference type="ChEBI" id="CHEBI:29986"/>
        <dbReference type="ChEBI" id="CHEBI:30616"/>
        <dbReference type="ChEBI" id="CHEBI:43474"/>
        <dbReference type="ChEBI" id="CHEBI:83898"/>
        <dbReference type="ChEBI" id="CHEBI:83900"/>
        <dbReference type="ChEBI" id="CHEBI:456216"/>
        <dbReference type="EC" id="6.3.2.9"/>
    </reaction>
</comment>
<comment type="pathway">
    <text evidence="1">Cell wall biogenesis; peptidoglycan biosynthesis.</text>
</comment>
<comment type="subcellular location">
    <subcellularLocation>
        <location evidence="1">Cytoplasm</location>
    </subcellularLocation>
</comment>
<comment type="similarity">
    <text evidence="1">Belongs to the MurCDEF family.</text>
</comment>
<keyword id="KW-0067">ATP-binding</keyword>
<keyword id="KW-0131">Cell cycle</keyword>
<keyword id="KW-0132">Cell division</keyword>
<keyword id="KW-0133">Cell shape</keyword>
<keyword id="KW-0961">Cell wall biogenesis/degradation</keyword>
<keyword id="KW-0963">Cytoplasm</keyword>
<keyword id="KW-0436">Ligase</keyword>
<keyword id="KW-0547">Nucleotide-binding</keyword>
<keyword id="KW-0573">Peptidoglycan synthesis</keyword>
<keyword id="KW-1185">Reference proteome</keyword>